<name>THIE_BACCQ</name>
<keyword id="KW-0460">Magnesium</keyword>
<keyword id="KW-0479">Metal-binding</keyword>
<keyword id="KW-0784">Thiamine biosynthesis</keyword>
<keyword id="KW-0808">Transferase</keyword>
<reference key="1">
    <citation type="journal article" date="2009" name="J. Bacteriol.">
        <title>Complete genome sequence of the extremophilic Bacillus cereus strain Q1 with industrial applications.</title>
        <authorList>
            <person name="Xiong Z."/>
            <person name="Jiang Y."/>
            <person name="Qi D."/>
            <person name="Lu H."/>
            <person name="Yang F."/>
            <person name="Yang J."/>
            <person name="Chen L."/>
            <person name="Sun L."/>
            <person name="Xu X."/>
            <person name="Xue Y."/>
            <person name="Zhu Y."/>
            <person name="Jin Q."/>
        </authorList>
    </citation>
    <scope>NUCLEOTIDE SEQUENCE [LARGE SCALE GENOMIC DNA]</scope>
    <source>
        <strain>Q1</strain>
    </source>
</reference>
<sequence>MSRISKSEMSRLLSVYFIMGSNNCTKDPLQVLREALEGGITIFQFREKGEGALTEEKRICFAKELQAICKEYGVPFIVNDDVELALELDADGVHVGQDDEGITSVREKMGDKIVGVSTHTIEEARWAIENGADYLGVGPIFPTSTKKDTKAVQGTKGLAHFREQGITIPIVGIGGISIENTASVIEAGADGVSVISAISLAESAYESTKRLVEEVSNSL</sequence>
<organism>
    <name type="scientific">Bacillus cereus (strain Q1)</name>
    <dbReference type="NCBI Taxonomy" id="361100"/>
    <lineage>
        <taxon>Bacteria</taxon>
        <taxon>Bacillati</taxon>
        <taxon>Bacillota</taxon>
        <taxon>Bacilli</taxon>
        <taxon>Bacillales</taxon>
        <taxon>Bacillaceae</taxon>
        <taxon>Bacillus</taxon>
        <taxon>Bacillus cereus group</taxon>
    </lineage>
</organism>
<protein>
    <recommendedName>
        <fullName evidence="1">Thiamine-phosphate synthase</fullName>
        <shortName evidence="1">TP synthase</shortName>
        <shortName evidence="1">TPS</shortName>
        <ecNumber evidence="1">2.5.1.3</ecNumber>
    </recommendedName>
    <alternativeName>
        <fullName evidence="1">Thiamine-phosphate pyrophosphorylase</fullName>
        <shortName evidence="1">TMP pyrophosphorylase</shortName>
        <shortName evidence="1">TMP-PPase</shortName>
    </alternativeName>
</protein>
<dbReference type="EC" id="2.5.1.3" evidence="1"/>
<dbReference type="EMBL" id="CP000227">
    <property type="protein sequence ID" value="ACM10934.1"/>
    <property type="molecule type" value="Genomic_DNA"/>
</dbReference>
<dbReference type="SMR" id="B9J2L5"/>
<dbReference type="KEGG" id="bcq:BCQ_0462"/>
<dbReference type="HOGENOM" id="CLU_018272_3_2_9"/>
<dbReference type="UniPathway" id="UPA00060">
    <property type="reaction ID" value="UER00141"/>
</dbReference>
<dbReference type="Proteomes" id="UP000000441">
    <property type="component" value="Chromosome"/>
</dbReference>
<dbReference type="GO" id="GO:0005737">
    <property type="term" value="C:cytoplasm"/>
    <property type="evidence" value="ECO:0007669"/>
    <property type="project" value="TreeGrafter"/>
</dbReference>
<dbReference type="GO" id="GO:0000287">
    <property type="term" value="F:magnesium ion binding"/>
    <property type="evidence" value="ECO:0007669"/>
    <property type="project" value="UniProtKB-UniRule"/>
</dbReference>
<dbReference type="GO" id="GO:0004789">
    <property type="term" value="F:thiamine-phosphate diphosphorylase activity"/>
    <property type="evidence" value="ECO:0007669"/>
    <property type="project" value="UniProtKB-UniRule"/>
</dbReference>
<dbReference type="GO" id="GO:0009228">
    <property type="term" value="P:thiamine biosynthetic process"/>
    <property type="evidence" value="ECO:0007669"/>
    <property type="project" value="UniProtKB-KW"/>
</dbReference>
<dbReference type="GO" id="GO:0009229">
    <property type="term" value="P:thiamine diphosphate biosynthetic process"/>
    <property type="evidence" value="ECO:0007669"/>
    <property type="project" value="UniProtKB-UniRule"/>
</dbReference>
<dbReference type="CDD" id="cd00564">
    <property type="entry name" value="TMP_TenI"/>
    <property type="match status" value="1"/>
</dbReference>
<dbReference type="FunFam" id="3.20.20.70:FF:000096">
    <property type="entry name" value="Thiamine-phosphate synthase"/>
    <property type="match status" value="1"/>
</dbReference>
<dbReference type="Gene3D" id="3.20.20.70">
    <property type="entry name" value="Aldolase class I"/>
    <property type="match status" value="1"/>
</dbReference>
<dbReference type="HAMAP" id="MF_00097">
    <property type="entry name" value="TMP_synthase"/>
    <property type="match status" value="1"/>
</dbReference>
<dbReference type="InterPro" id="IPR013785">
    <property type="entry name" value="Aldolase_TIM"/>
</dbReference>
<dbReference type="InterPro" id="IPR036206">
    <property type="entry name" value="ThiamineP_synth_sf"/>
</dbReference>
<dbReference type="InterPro" id="IPR022998">
    <property type="entry name" value="ThiamineP_synth_TenI"/>
</dbReference>
<dbReference type="InterPro" id="IPR034291">
    <property type="entry name" value="TMP_synthase"/>
</dbReference>
<dbReference type="NCBIfam" id="TIGR00693">
    <property type="entry name" value="thiE"/>
    <property type="match status" value="1"/>
</dbReference>
<dbReference type="PANTHER" id="PTHR20857">
    <property type="entry name" value="THIAMINE-PHOSPHATE PYROPHOSPHORYLASE"/>
    <property type="match status" value="1"/>
</dbReference>
<dbReference type="PANTHER" id="PTHR20857:SF15">
    <property type="entry name" value="THIAMINE-PHOSPHATE SYNTHASE"/>
    <property type="match status" value="1"/>
</dbReference>
<dbReference type="Pfam" id="PF02581">
    <property type="entry name" value="TMP-TENI"/>
    <property type="match status" value="1"/>
</dbReference>
<dbReference type="SUPFAM" id="SSF51391">
    <property type="entry name" value="Thiamin phosphate synthase"/>
    <property type="match status" value="1"/>
</dbReference>
<proteinExistence type="inferred from homology"/>
<feature type="chain" id="PRO_1000198074" description="Thiamine-phosphate synthase">
    <location>
        <begin position="1"/>
        <end position="219"/>
    </location>
</feature>
<feature type="binding site" evidence="1">
    <location>
        <begin position="44"/>
        <end position="48"/>
    </location>
    <ligand>
        <name>4-amino-2-methyl-5-(diphosphooxymethyl)pyrimidine</name>
        <dbReference type="ChEBI" id="CHEBI:57841"/>
    </ligand>
</feature>
<feature type="binding site" evidence="1">
    <location>
        <position position="79"/>
    </location>
    <ligand>
        <name>4-amino-2-methyl-5-(diphosphooxymethyl)pyrimidine</name>
        <dbReference type="ChEBI" id="CHEBI:57841"/>
    </ligand>
</feature>
<feature type="binding site" evidence="1">
    <location>
        <position position="80"/>
    </location>
    <ligand>
        <name>Mg(2+)</name>
        <dbReference type="ChEBI" id="CHEBI:18420"/>
    </ligand>
</feature>
<feature type="binding site" evidence="1">
    <location>
        <position position="99"/>
    </location>
    <ligand>
        <name>Mg(2+)</name>
        <dbReference type="ChEBI" id="CHEBI:18420"/>
    </ligand>
</feature>
<feature type="binding site" evidence="1">
    <location>
        <position position="117"/>
    </location>
    <ligand>
        <name>4-amino-2-methyl-5-(diphosphooxymethyl)pyrimidine</name>
        <dbReference type="ChEBI" id="CHEBI:57841"/>
    </ligand>
</feature>
<feature type="binding site" evidence="1">
    <location>
        <begin position="143"/>
        <end position="145"/>
    </location>
    <ligand>
        <name>2-[(2R,5Z)-2-carboxy-4-methylthiazol-5(2H)-ylidene]ethyl phosphate</name>
        <dbReference type="ChEBI" id="CHEBI:62899"/>
    </ligand>
</feature>
<feature type="binding site" evidence="1">
    <location>
        <position position="146"/>
    </location>
    <ligand>
        <name>4-amino-2-methyl-5-(diphosphooxymethyl)pyrimidine</name>
        <dbReference type="ChEBI" id="CHEBI:57841"/>
    </ligand>
</feature>
<feature type="binding site" evidence="1">
    <location>
        <position position="175"/>
    </location>
    <ligand>
        <name>2-[(2R,5Z)-2-carboxy-4-methylthiazol-5(2H)-ylidene]ethyl phosphate</name>
        <dbReference type="ChEBI" id="CHEBI:62899"/>
    </ligand>
</feature>
<feature type="binding site" evidence="1">
    <location>
        <begin position="195"/>
        <end position="196"/>
    </location>
    <ligand>
        <name>2-[(2R,5Z)-2-carboxy-4-methylthiazol-5(2H)-ylidene]ethyl phosphate</name>
        <dbReference type="ChEBI" id="CHEBI:62899"/>
    </ligand>
</feature>
<accession>B9J2L5</accession>
<evidence type="ECO:0000255" key="1">
    <source>
        <dbReference type="HAMAP-Rule" id="MF_00097"/>
    </source>
</evidence>
<gene>
    <name evidence="1" type="primary">thiE</name>
    <name type="ordered locus">BCQ_0462</name>
</gene>
<comment type="function">
    <text evidence="1">Condenses 4-methyl-5-(beta-hydroxyethyl)thiazole monophosphate (THZ-P) and 2-methyl-4-amino-5-hydroxymethyl pyrimidine pyrophosphate (HMP-PP) to form thiamine monophosphate (TMP).</text>
</comment>
<comment type="catalytic activity">
    <reaction evidence="1">
        <text>2-[(2R,5Z)-2-carboxy-4-methylthiazol-5(2H)-ylidene]ethyl phosphate + 4-amino-2-methyl-5-(diphosphooxymethyl)pyrimidine + 2 H(+) = thiamine phosphate + CO2 + diphosphate</text>
        <dbReference type="Rhea" id="RHEA:47844"/>
        <dbReference type="ChEBI" id="CHEBI:15378"/>
        <dbReference type="ChEBI" id="CHEBI:16526"/>
        <dbReference type="ChEBI" id="CHEBI:33019"/>
        <dbReference type="ChEBI" id="CHEBI:37575"/>
        <dbReference type="ChEBI" id="CHEBI:57841"/>
        <dbReference type="ChEBI" id="CHEBI:62899"/>
        <dbReference type="EC" id="2.5.1.3"/>
    </reaction>
</comment>
<comment type="catalytic activity">
    <reaction evidence="1">
        <text>2-(2-carboxy-4-methylthiazol-5-yl)ethyl phosphate + 4-amino-2-methyl-5-(diphosphooxymethyl)pyrimidine + 2 H(+) = thiamine phosphate + CO2 + diphosphate</text>
        <dbReference type="Rhea" id="RHEA:47848"/>
        <dbReference type="ChEBI" id="CHEBI:15378"/>
        <dbReference type="ChEBI" id="CHEBI:16526"/>
        <dbReference type="ChEBI" id="CHEBI:33019"/>
        <dbReference type="ChEBI" id="CHEBI:37575"/>
        <dbReference type="ChEBI" id="CHEBI:57841"/>
        <dbReference type="ChEBI" id="CHEBI:62890"/>
        <dbReference type="EC" id="2.5.1.3"/>
    </reaction>
</comment>
<comment type="catalytic activity">
    <reaction evidence="1">
        <text>4-methyl-5-(2-phosphooxyethyl)-thiazole + 4-amino-2-methyl-5-(diphosphooxymethyl)pyrimidine + H(+) = thiamine phosphate + diphosphate</text>
        <dbReference type="Rhea" id="RHEA:22328"/>
        <dbReference type="ChEBI" id="CHEBI:15378"/>
        <dbReference type="ChEBI" id="CHEBI:33019"/>
        <dbReference type="ChEBI" id="CHEBI:37575"/>
        <dbReference type="ChEBI" id="CHEBI:57841"/>
        <dbReference type="ChEBI" id="CHEBI:58296"/>
        <dbReference type="EC" id="2.5.1.3"/>
    </reaction>
</comment>
<comment type="cofactor">
    <cofactor evidence="1">
        <name>Mg(2+)</name>
        <dbReference type="ChEBI" id="CHEBI:18420"/>
    </cofactor>
    <text evidence="1">Binds 1 Mg(2+) ion per subunit.</text>
</comment>
<comment type="pathway">
    <text evidence="1">Cofactor biosynthesis; thiamine diphosphate biosynthesis; thiamine phosphate from 4-amino-2-methyl-5-diphosphomethylpyrimidine and 4-methyl-5-(2-phosphoethyl)-thiazole: step 1/1.</text>
</comment>
<comment type="similarity">
    <text evidence="1">Belongs to the thiamine-phosphate synthase family.</text>
</comment>